<evidence type="ECO:0000255" key="1"/>
<name>062L_IIV6</name>
<organismHost>
    <name type="scientific">Acheta domesticus</name>
    <name type="common">House cricket</name>
    <dbReference type="NCBI Taxonomy" id="6997"/>
</organismHost>
<organismHost>
    <name type="scientific">Chilo suppressalis</name>
    <name type="common">Asiatic rice borer moth</name>
    <dbReference type="NCBI Taxonomy" id="168631"/>
</organismHost>
<organismHost>
    <name type="scientific">Gryllus bimaculatus</name>
    <name type="common">Two-spotted cricket</name>
    <dbReference type="NCBI Taxonomy" id="6999"/>
</organismHost>
<organismHost>
    <name type="scientific">Gryllus campestris</name>
    <dbReference type="NCBI Taxonomy" id="58607"/>
</organismHost>
<organismHost>
    <name type="scientific">Spodoptera frugiperda</name>
    <name type="common">Fall armyworm</name>
    <dbReference type="NCBI Taxonomy" id="7108"/>
</organismHost>
<accession>O55706</accession>
<reference key="1">
    <citation type="journal article" date="2001" name="Virology">
        <title>Analysis of the first complete DNA sequence of an invertebrate iridovirus: coding strategy of the genome of Chilo iridescent virus.</title>
        <authorList>
            <person name="Jakob N.J."/>
            <person name="Mueller K."/>
            <person name="Bahr U."/>
            <person name="Darai G."/>
        </authorList>
    </citation>
    <scope>NUCLEOTIDE SEQUENCE [LARGE SCALE GENOMIC DNA]</scope>
</reference>
<reference key="2">
    <citation type="journal article" date="2007" name="Virol. J.">
        <title>Comparative genomic analysis of the family Iridoviridae: re-annotating and defining the core set of iridovirus genes.</title>
        <authorList>
            <person name="Eaton H.E."/>
            <person name="Metcalf J."/>
            <person name="Penny E."/>
            <person name="Tcherepanov V."/>
            <person name="Upton C."/>
            <person name="Brunetti C.R."/>
        </authorList>
    </citation>
    <scope>GENOME REANNOTATION</scope>
</reference>
<gene>
    <name type="ORF">IIV6-062L</name>
</gene>
<feature type="signal peptide" evidence="1">
    <location>
        <begin position="1"/>
        <end position="26"/>
    </location>
</feature>
<feature type="chain" id="PRO_0000377975" description="Uncharacterized protein 062L">
    <location>
        <begin position="27"/>
        <end position="179"/>
    </location>
</feature>
<dbReference type="EMBL" id="AF303741">
    <property type="protein sequence ID" value="AAB94417.1"/>
    <property type="molecule type" value="Genomic_DNA"/>
</dbReference>
<dbReference type="PIR" id="T03043">
    <property type="entry name" value="T03043"/>
</dbReference>
<dbReference type="RefSeq" id="NP_149525.1">
    <property type="nucleotide sequence ID" value="NC_003038.1"/>
</dbReference>
<dbReference type="SMR" id="O55706"/>
<dbReference type="KEGG" id="vg:1733192"/>
<dbReference type="Proteomes" id="UP000001359">
    <property type="component" value="Genome"/>
</dbReference>
<organism>
    <name type="scientific">Invertebrate iridescent virus 6</name>
    <name type="common">IIV-6</name>
    <name type="synonym">Chilo iridescent virus</name>
    <dbReference type="NCBI Taxonomy" id="176652"/>
    <lineage>
        <taxon>Viruses</taxon>
        <taxon>Varidnaviria</taxon>
        <taxon>Bamfordvirae</taxon>
        <taxon>Nucleocytoviricota</taxon>
        <taxon>Megaviricetes</taxon>
        <taxon>Pimascovirales</taxon>
        <taxon>Iridoviridae</taxon>
        <taxon>Betairidovirinae</taxon>
        <taxon>Iridovirus</taxon>
    </lineage>
</organism>
<keyword id="KW-1185">Reference proteome</keyword>
<keyword id="KW-0732">Signal</keyword>
<proteinExistence type="inferred from homology"/>
<sequence>MKKNMILFFGILKKLLICILKMEIKCWLTSDIVYFDSELALTVKQFFMKKNNTILDKIAAHCYGLIMQKISQPVTFKNYIYIWRAVLFADCTIKTNKTPDTQNIINLSQNATEEVKIIIDELIDCFKNKNNFKEEEYKPNLDLLNSYIKNIKKFITENKTSKFIFDKDWEILINNIWMN</sequence>
<protein>
    <recommendedName>
        <fullName>Uncharacterized protein 062L</fullName>
    </recommendedName>
</protein>